<reference key="1">
    <citation type="journal article" date="2003" name="Proc. Natl. Acad. Sci. U.S.A.">
        <title>The complete genome sequence of the Arabidopsis and tomato pathogen Pseudomonas syringae pv. tomato DC3000.</title>
        <authorList>
            <person name="Buell C.R."/>
            <person name="Joardar V."/>
            <person name="Lindeberg M."/>
            <person name="Selengut J."/>
            <person name="Paulsen I.T."/>
            <person name="Gwinn M.L."/>
            <person name="Dodson R.J."/>
            <person name="DeBoy R.T."/>
            <person name="Durkin A.S."/>
            <person name="Kolonay J.F."/>
            <person name="Madupu R."/>
            <person name="Daugherty S.C."/>
            <person name="Brinkac L.M."/>
            <person name="Beanan M.J."/>
            <person name="Haft D.H."/>
            <person name="Nelson W.C."/>
            <person name="Davidsen T.M."/>
            <person name="Zafar N."/>
            <person name="Zhou L."/>
            <person name="Liu J."/>
            <person name="Yuan Q."/>
            <person name="Khouri H.M."/>
            <person name="Fedorova N.B."/>
            <person name="Tran B."/>
            <person name="Russell D."/>
            <person name="Berry K.J."/>
            <person name="Utterback T.R."/>
            <person name="Van Aken S.E."/>
            <person name="Feldblyum T.V."/>
            <person name="D'Ascenzo M."/>
            <person name="Deng W.-L."/>
            <person name="Ramos A.R."/>
            <person name="Alfano J.R."/>
            <person name="Cartinhour S."/>
            <person name="Chatterjee A.K."/>
            <person name="Delaney T.P."/>
            <person name="Lazarowitz S.G."/>
            <person name="Martin G.B."/>
            <person name="Schneider D.J."/>
            <person name="Tang X."/>
            <person name="Bender C.L."/>
            <person name="White O."/>
            <person name="Fraser C.M."/>
            <person name="Collmer A."/>
        </authorList>
    </citation>
    <scope>NUCLEOTIDE SEQUENCE [LARGE SCALE GENOMIC DNA]</scope>
    <source>
        <strain>ATCC BAA-871 / DC3000</strain>
    </source>
</reference>
<protein>
    <recommendedName>
        <fullName evidence="1">Polyphosphate kinase</fullName>
        <ecNumber evidence="1">2.7.4.1</ecNumber>
    </recommendedName>
    <alternativeName>
        <fullName evidence="1">ATP-polyphosphate phosphotransferase</fullName>
    </alternativeName>
    <alternativeName>
        <fullName evidence="1">Polyphosphoric acid kinase</fullName>
    </alternativeName>
</protein>
<proteinExistence type="inferred from homology"/>
<dbReference type="EC" id="2.7.4.1" evidence="1"/>
<dbReference type="EMBL" id="AE016853">
    <property type="protein sequence ID" value="AAO58676.1"/>
    <property type="molecule type" value="Genomic_DNA"/>
</dbReference>
<dbReference type="RefSeq" id="NP_794981.1">
    <property type="nucleotide sequence ID" value="NC_004578.1"/>
</dbReference>
<dbReference type="SMR" id="Q87UP6"/>
<dbReference type="STRING" id="223283.PSPTO_5250"/>
<dbReference type="GeneID" id="1186935"/>
<dbReference type="KEGG" id="pst:PSPTO_5250"/>
<dbReference type="PATRIC" id="fig|223283.9.peg.5373"/>
<dbReference type="eggNOG" id="COG0855">
    <property type="taxonomic scope" value="Bacteria"/>
</dbReference>
<dbReference type="HOGENOM" id="CLU_009678_5_0_6"/>
<dbReference type="OrthoDB" id="9761456at2"/>
<dbReference type="PhylomeDB" id="Q87UP6"/>
<dbReference type="Proteomes" id="UP000002515">
    <property type="component" value="Chromosome"/>
</dbReference>
<dbReference type="GO" id="GO:0009358">
    <property type="term" value="C:polyphosphate kinase complex"/>
    <property type="evidence" value="ECO:0007669"/>
    <property type="project" value="InterPro"/>
</dbReference>
<dbReference type="GO" id="GO:0005524">
    <property type="term" value="F:ATP binding"/>
    <property type="evidence" value="ECO:0007669"/>
    <property type="project" value="UniProtKB-KW"/>
</dbReference>
<dbReference type="GO" id="GO:0046872">
    <property type="term" value="F:metal ion binding"/>
    <property type="evidence" value="ECO:0007669"/>
    <property type="project" value="UniProtKB-KW"/>
</dbReference>
<dbReference type="GO" id="GO:0008976">
    <property type="term" value="F:polyphosphate kinase activity"/>
    <property type="evidence" value="ECO:0007669"/>
    <property type="project" value="UniProtKB-UniRule"/>
</dbReference>
<dbReference type="GO" id="GO:0006799">
    <property type="term" value="P:polyphosphate biosynthetic process"/>
    <property type="evidence" value="ECO:0007669"/>
    <property type="project" value="UniProtKB-UniRule"/>
</dbReference>
<dbReference type="CDD" id="cd09165">
    <property type="entry name" value="PLDc_PaPPK1_C1_like"/>
    <property type="match status" value="1"/>
</dbReference>
<dbReference type="CDD" id="cd09168">
    <property type="entry name" value="PLDc_PaPPK1_C2_like"/>
    <property type="match status" value="1"/>
</dbReference>
<dbReference type="Gene3D" id="3.30.870.10">
    <property type="entry name" value="Endonuclease Chain A"/>
    <property type="match status" value="2"/>
</dbReference>
<dbReference type="Gene3D" id="3.30.1840.10">
    <property type="entry name" value="Polyphosphate kinase middle domain"/>
    <property type="match status" value="1"/>
</dbReference>
<dbReference type="Gene3D" id="1.20.58.310">
    <property type="entry name" value="Polyphosphate kinase N-terminal domain"/>
    <property type="match status" value="1"/>
</dbReference>
<dbReference type="HAMAP" id="MF_00347">
    <property type="entry name" value="Polyphosphate_kinase"/>
    <property type="match status" value="1"/>
</dbReference>
<dbReference type="InterPro" id="IPR003414">
    <property type="entry name" value="PP_kinase"/>
</dbReference>
<dbReference type="InterPro" id="IPR041108">
    <property type="entry name" value="PP_kinase_C_1"/>
</dbReference>
<dbReference type="InterPro" id="IPR024953">
    <property type="entry name" value="PP_kinase_middle"/>
</dbReference>
<dbReference type="InterPro" id="IPR036830">
    <property type="entry name" value="PP_kinase_middle_dom_sf"/>
</dbReference>
<dbReference type="InterPro" id="IPR025200">
    <property type="entry name" value="PPK_C_dom2"/>
</dbReference>
<dbReference type="InterPro" id="IPR025198">
    <property type="entry name" value="PPK_N_dom"/>
</dbReference>
<dbReference type="InterPro" id="IPR036832">
    <property type="entry name" value="PPK_N_dom_sf"/>
</dbReference>
<dbReference type="NCBIfam" id="TIGR03705">
    <property type="entry name" value="poly_P_kin"/>
    <property type="match status" value="1"/>
</dbReference>
<dbReference type="NCBIfam" id="NF003917">
    <property type="entry name" value="PRK05443.1-1"/>
    <property type="match status" value="1"/>
</dbReference>
<dbReference type="NCBIfam" id="NF003918">
    <property type="entry name" value="PRK05443.1-2"/>
    <property type="match status" value="1"/>
</dbReference>
<dbReference type="NCBIfam" id="NF003921">
    <property type="entry name" value="PRK05443.2-2"/>
    <property type="match status" value="1"/>
</dbReference>
<dbReference type="PANTHER" id="PTHR30218">
    <property type="entry name" value="POLYPHOSPHATE KINASE"/>
    <property type="match status" value="1"/>
</dbReference>
<dbReference type="PANTHER" id="PTHR30218:SF0">
    <property type="entry name" value="POLYPHOSPHATE KINASE"/>
    <property type="match status" value="1"/>
</dbReference>
<dbReference type="Pfam" id="PF02503">
    <property type="entry name" value="PP_kinase"/>
    <property type="match status" value="1"/>
</dbReference>
<dbReference type="Pfam" id="PF13090">
    <property type="entry name" value="PP_kinase_C"/>
    <property type="match status" value="1"/>
</dbReference>
<dbReference type="Pfam" id="PF17941">
    <property type="entry name" value="PP_kinase_C_1"/>
    <property type="match status" value="1"/>
</dbReference>
<dbReference type="Pfam" id="PF13089">
    <property type="entry name" value="PP_kinase_N"/>
    <property type="match status" value="1"/>
</dbReference>
<dbReference type="PIRSF" id="PIRSF015589">
    <property type="entry name" value="PP_kinase"/>
    <property type="match status" value="1"/>
</dbReference>
<dbReference type="SUPFAM" id="SSF56024">
    <property type="entry name" value="Phospholipase D/nuclease"/>
    <property type="match status" value="2"/>
</dbReference>
<dbReference type="SUPFAM" id="SSF143724">
    <property type="entry name" value="PHP14-like"/>
    <property type="match status" value="1"/>
</dbReference>
<dbReference type="SUPFAM" id="SSF140356">
    <property type="entry name" value="PPK N-terminal domain-like"/>
    <property type="match status" value="1"/>
</dbReference>
<name>PPK1_PSESM</name>
<keyword id="KW-0067">ATP-binding</keyword>
<keyword id="KW-0418">Kinase</keyword>
<keyword id="KW-0460">Magnesium</keyword>
<keyword id="KW-0479">Metal-binding</keyword>
<keyword id="KW-0547">Nucleotide-binding</keyword>
<keyword id="KW-0597">Phosphoprotein</keyword>
<keyword id="KW-1185">Reference proteome</keyword>
<keyword id="KW-0808">Transferase</keyword>
<gene>
    <name evidence="1" type="primary">ppk</name>
    <name type="ordered locus">PSPTO_5250</name>
</gene>
<feature type="chain" id="PRO_0000128654" description="Polyphosphate kinase">
    <location>
        <begin position="1"/>
        <end position="736"/>
    </location>
</feature>
<feature type="active site" description="Phosphohistidine intermediate" evidence="1">
    <location>
        <position position="481"/>
    </location>
</feature>
<feature type="binding site" evidence="1">
    <location>
        <position position="91"/>
    </location>
    <ligand>
        <name>ATP</name>
        <dbReference type="ChEBI" id="CHEBI:30616"/>
    </ligand>
</feature>
<feature type="binding site" evidence="1">
    <location>
        <position position="421"/>
    </location>
    <ligand>
        <name>Mg(2+)</name>
        <dbReference type="ChEBI" id="CHEBI:18420"/>
    </ligand>
</feature>
<feature type="binding site" evidence="1">
    <location>
        <position position="451"/>
    </location>
    <ligand>
        <name>Mg(2+)</name>
        <dbReference type="ChEBI" id="CHEBI:18420"/>
    </ligand>
</feature>
<feature type="binding site" evidence="1">
    <location>
        <position position="514"/>
    </location>
    <ligand>
        <name>ATP</name>
        <dbReference type="ChEBI" id="CHEBI:30616"/>
    </ligand>
</feature>
<feature type="binding site" evidence="1">
    <location>
        <position position="610"/>
    </location>
    <ligand>
        <name>ATP</name>
        <dbReference type="ChEBI" id="CHEBI:30616"/>
    </ligand>
</feature>
<feature type="binding site" evidence="1">
    <location>
        <position position="638"/>
    </location>
    <ligand>
        <name>ATP</name>
        <dbReference type="ChEBI" id="CHEBI:30616"/>
    </ligand>
</feature>
<evidence type="ECO:0000255" key="1">
    <source>
        <dbReference type="HAMAP-Rule" id="MF_00347"/>
    </source>
</evidence>
<comment type="function">
    <text evidence="1">Catalyzes the reversible transfer of the terminal phosphate of ATP to form a long-chain polyphosphate (polyP).</text>
</comment>
<comment type="catalytic activity">
    <reaction evidence="1">
        <text>[phosphate](n) + ATP = [phosphate](n+1) + ADP</text>
        <dbReference type="Rhea" id="RHEA:19573"/>
        <dbReference type="Rhea" id="RHEA-COMP:9859"/>
        <dbReference type="Rhea" id="RHEA-COMP:14280"/>
        <dbReference type="ChEBI" id="CHEBI:16838"/>
        <dbReference type="ChEBI" id="CHEBI:30616"/>
        <dbReference type="ChEBI" id="CHEBI:456216"/>
        <dbReference type="EC" id="2.7.4.1"/>
    </reaction>
</comment>
<comment type="cofactor">
    <cofactor evidence="1">
        <name>Mg(2+)</name>
        <dbReference type="ChEBI" id="CHEBI:18420"/>
    </cofactor>
</comment>
<comment type="PTM">
    <text evidence="1">An intermediate of this reaction is the autophosphorylated ppk in which a phosphate is covalently linked to a histidine residue through a N-P bond.</text>
</comment>
<comment type="similarity">
    <text evidence="1">Belongs to the polyphosphate kinase 1 (PPK1) family.</text>
</comment>
<accession>Q87UP6</accession>
<organism>
    <name type="scientific">Pseudomonas syringae pv. tomato (strain ATCC BAA-871 / DC3000)</name>
    <dbReference type="NCBI Taxonomy" id="223283"/>
    <lineage>
        <taxon>Bacteria</taxon>
        <taxon>Pseudomonadati</taxon>
        <taxon>Pseudomonadota</taxon>
        <taxon>Gammaproteobacteria</taxon>
        <taxon>Pseudomonadales</taxon>
        <taxon>Pseudomonadaceae</taxon>
        <taxon>Pseudomonas</taxon>
    </lineage>
</organism>
<sequence>MNTEALIEAAVEVDVQEAAPVVEPDIEVIPAIEAPAASLPAIVAPNLDDSSLYIHRELSQLQFNIRVLEQALDESYPLLERLKFLLIFSSNLDEFFEIRVAGLKKQITFAREQAGADGLQPHQALARISELVHGHVDRQYAILNDILLPELEKHQVRFIRRRHWTAKLKAWVRRYFRDEIAPIITPIGLDPTHPFPLLVNKSLNFIVELEGIDAFGRDSGLAIIPAPRLLPRVIKVPEEVCGPGDNFVFLSSMIHAHADDLFQGMKVKGCYQFRLTRNADLALDSEDVEDLARALRGELFSRRYGDAVRLEVADTCPKHLSDYLLKQFNLHESELYQVNGPVNLTRLFSITGLDSHPELQYPPFTPAIPKLLQNSENVFSVVSKQDILLLHPFESFTPVVDLLRQAAKDPHVLAVRQTLYRSGANSEIVDALVDAARNGKEVTAVIELRARFDEESNLQLASRLQAAGAVVIYGVVGFKTHAKMMLILRREAGEIVRYAHLGTGNYHAGNARLYTDYSLLTSDDALCEDVGKLFSQLIGMGKTLRMKKLLHAPFTLKKGMLDMIARETQFALDGKPAHIIAKFNSLTDPKIIRALYKASQSGVRIDLVVRGMCCLRPGIAGVSHNIHVRSIIGRFLEHTRVFYFLNGGDEQMFLSSADWMERNLDKRVETCFPVEGKKLILRVKKELESYLTDNTHSWLLQSDGRYVRSMPTGNQNARSAQATLLERLSNPVLSVR</sequence>